<reference key="1">
    <citation type="submission" date="2007-06" db="EMBL/GenBank/DDBJ databases">
        <authorList>
            <person name="Brinkac L.M."/>
            <person name="Daugherty S."/>
            <person name="Dodson R.J."/>
            <person name="Madupu R."/>
            <person name="Brown J.L."/>
            <person name="Bruce D."/>
            <person name="Detter C."/>
            <person name="Munk C."/>
            <person name="Smith L.A."/>
            <person name="Smith T.J."/>
            <person name="White O."/>
            <person name="Brettin T.S."/>
        </authorList>
    </citation>
    <scope>NUCLEOTIDE SEQUENCE [LARGE SCALE GENOMIC DNA]</scope>
    <source>
        <strain>Langeland / NCTC 10281 / Type F</strain>
    </source>
</reference>
<evidence type="ECO:0000255" key="1">
    <source>
        <dbReference type="HAMAP-Rule" id="MF_00005"/>
    </source>
</evidence>
<proteinExistence type="inferred from homology"/>
<gene>
    <name evidence="1" type="primary">argG</name>
    <name type="ordered locus">CLI_2736</name>
</gene>
<name>ASSY_CLOBL</name>
<protein>
    <recommendedName>
        <fullName evidence="1">Argininosuccinate synthase</fullName>
        <ecNumber evidence="1">6.3.4.5</ecNumber>
    </recommendedName>
    <alternativeName>
        <fullName evidence="1">Citrulline--aspartate ligase</fullName>
    </alternativeName>
</protein>
<accession>A7GGQ9</accession>
<dbReference type="EC" id="6.3.4.5" evidence="1"/>
<dbReference type="EMBL" id="CP000728">
    <property type="protein sequence ID" value="ABS39345.1"/>
    <property type="molecule type" value="Genomic_DNA"/>
</dbReference>
<dbReference type="RefSeq" id="WP_012100534.1">
    <property type="nucleotide sequence ID" value="NC_009699.1"/>
</dbReference>
<dbReference type="SMR" id="A7GGQ9"/>
<dbReference type="KEGG" id="cbf:CLI_2736"/>
<dbReference type="HOGENOM" id="CLU_032784_4_2_9"/>
<dbReference type="UniPathway" id="UPA00068">
    <property type="reaction ID" value="UER00113"/>
</dbReference>
<dbReference type="Proteomes" id="UP000002410">
    <property type="component" value="Chromosome"/>
</dbReference>
<dbReference type="GO" id="GO:0005737">
    <property type="term" value="C:cytoplasm"/>
    <property type="evidence" value="ECO:0007669"/>
    <property type="project" value="UniProtKB-SubCell"/>
</dbReference>
<dbReference type="GO" id="GO:0004055">
    <property type="term" value="F:argininosuccinate synthase activity"/>
    <property type="evidence" value="ECO:0007669"/>
    <property type="project" value="UniProtKB-UniRule"/>
</dbReference>
<dbReference type="GO" id="GO:0005524">
    <property type="term" value="F:ATP binding"/>
    <property type="evidence" value="ECO:0007669"/>
    <property type="project" value="UniProtKB-UniRule"/>
</dbReference>
<dbReference type="GO" id="GO:0000053">
    <property type="term" value="P:argininosuccinate metabolic process"/>
    <property type="evidence" value="ECO:0007669"/>
    <property type="project" value="TreeGrafter"/>
</dbReference>
<dbReference type="GO" id="GO:0006526">
    <property type="term" value="P:L-arginine biosynthetic process"/>
    <property type="evidence" value="ECO:0007669"/>
    <property type="project" value="UniProtKB-UniRule"/>
</dbReference>
<dbReference type="GO" id="GO:0000050">
    <property type="term" value="P:urea cycle"/>
    <property type="evidence" value="ECO:0007669"/>
    <property type="project" value="TreeGrafter"/>
</dbReference>
<dbReference type="CDD" id="cd01999">
    <property type="entry name" value="ASS"/>
    <property type="match status" value="1"/>
</dbReference>
<dbReference type="FunFam" id="3.40.50.620:FF:000019">
    <property type="entry name" value="Argininosuccinate synthase"/>
    <property type="match status" value="1"/>
</dbReference>
<dbReference type="FunFam" id="3.90.1260.10:FF:000007">
    <property type="entry name" value="Argininosuccinate synthase"/>
    <property type="match status" value="1"/>
</dbReference>
<dbReference type="Gene3D" id="3.90.1260.10">
    <property type="entry name" value="Argininosuccinate synthetase, chain A, domain 2"/>
    <property type="match status" value="1"/>
</dbReference>
<dbReference type="Gene3D" id="3.40.50.620">
    <property type="entry name" value="HUPs"/>
    <property type="match status" value="1"/>
</dbReference>
<dbReference type="Gene3D" id="1.20.5.470">
    <property type="entry name" value="Single helix bin"/>
    <property type="match status" value="1"/>
</dbReference>
<dbReference type="HAMAP" id="MF_00005">
    <property type="entry name" value="Arg_succ_synth_type1"/>
    <property type="match status" value="1"/>
</dbReference>
<dbReference type="InterPro" id="IPR048268">
    <property type="entry name" value="Arginosuc_syn_C"/>
</dbReference>
<dbReference type="InterPro" id="IPR048267">
    <property type="entry name" value="Arginosuc_syn_N"/>
</dbReference>
<dbReference type="InterPro" id="IPR001518">
    <property type="entry name" value="Arginosuc_synth"/>
</dbReference>
<dbReference type="InterPro" id="IPR018223">
    <property type="entry name" value="Arginosuc_synth_CS"/>
</dbReference>
<dbReference type="InterPro" id="IPR023434">
    <property type="entry name" value="Arginosuc_synth_type_1_subfam"/>
</dbReference>
<dbReference type="InterPro" id="IPR024074">
    <property type="entry name" value="AS_cat/multimer_dom_body"/>
</dbReference>
<dbReference type="InterPro" id="IPR014729">
    <property type="entry name" value="Rossmann-like_a/b/a_fold"/>
</dbReference>
<dbReference type="NCBIfam" id="TIGR00032">
    <property type="entry name" value="argG"/>
    <property type="match status" value="1"/>
</dbReference>
<dbReference type="NCBIfam" id="NF001770">
    <property type="entry name" value="PRK00509.1"/>
    <property type="match status" value="1"/>
</dbReference>
<dbReference type="PANTHER" id="PTHR11587">
    <property type="entry name" value="ARGININOSUCCINATE SYNTHASE"/>
    <property type="match status" value="1"/>
</dbReference>
<dbReference type="PANTHER" id="PTHR11587:SF2">
    <property type="entry name" value="ARGININOSUCCINATE SYNTHASE"/>
    <property type="match status" value="1"/>
</dbReference>
<dbReference type="Pfam" id="PF20979">
    <property type="entry name" value="Arginosuc_syn_C"/>
    <property type="match status" value="1"/>
</dbReference>
<dbReference type="Pfam" id="PF00764">
    <property type="entry name" value="Arginosuc_synth"/>
    <property type="match status" value="1"/>
</dbReference>
<dbReference type="SUPFAM" id="SSF52402">
    <property type="entry name" value="Adenine nucleotide alpha hydrolases-like"/>
    <property type="match status" value="1"/>
</dbReference>
<dbReference type="SUPFAM" id="SSF69864">
    <property type="entry name" value="Argininosuccinate synthetase, C-terminal domain"/>
    <property type="match status" value="1"/>
</dbReference>
<dbReference type="PROSITE" id="PS00564">
    <property type="entry name" value="ARGININOSUCCIN_SYN_1"/>
    <property type="match status" value="1"/>
</dbReference>
<dbReference type="PROSITE" id="PS00565">
    <property type="entry name" value="ARGININOSUCCIN_SYN_2"/>
    <property type="match status" value="1"/>
</dbReference>
<comment type="catalytic activity">
    <reaction evidence="1">
        <text>L-citrulline + L-aspartate + ATP = 2-(N(omega)-L-arginino)succinate + AMP + diphosphate + H(+)</text>
        <dbReference type="Rhea" id="RHEA:10932"/>
        <dbReference type="ChEBI" id="CHEBI:15378"/>
        <dbReference type="ChEBI" id="CHEBI:29991"/>
        <dbReference type="ChEBI" id="CHEBI:30616"/>
        <dbReference type="ChEBI" id="CHEBI:33019"/>
        <dbReference type="ChEBI" id="CHEBI:57472"/>
        <dbReference type="ChEBI" id="CHEBI:57743"/>
        <dbReference type="ChEBI" id="CHEBI:456215"/>
        <dbReference type="EC" id="6.3.4.5"/>
    </reaction>
</comment>
<comment type="pathway">
    <text evidence="1">Amino-acid biosynthesis; L-arginine biosynthesis; L-arginine from L-ornithine and carbamoyl phosphate: step 2/3.</text>
</comment>
<comment type="subunit">
    <text evidence="1">Homotetramer.</text>
</comment>
<comment type="subcellular location">
    <subcellularLocation>
        <location evidence="1">Cytoplasm</location>
    </subcellularLocation>
</comment>
<comment type="similarity">
    <text evidence="1">Belongs to the argininosuccinate synthase family. Type 1 subfamily.</text>
</comment>
<sequence>MKEKVVLAYSGGLDTSIIIPWLKENYDLDVIAVCVNVGQGDDMDYVKTKAIKSGASKIYVEDVKEEFVVDYLYKAIKSEALYEQDYMLGTSFARPLMAKKLVEIAHKEQAKYICHGCTGKGNDQVRFEVGVKAQDPTIKIIAPWRIWDIKSREDAIDYAKKVGVEVPVTKKKIYSVDRNLWHVSHEGGDLEDLKNEHKEDMYFMVTPPEKAKDEPTYLEIYFEKGVPVKINGEFLNPVDIIDKLNTIGGENGIGIADIIENRLVGMKSRGIYETPAGTLLYAAHKKLESVTLDKYTYQYKKLVSAQYGELVYNGLWFTALREAIDAFVDKTQENVTGTVKLKLYKGNIKPCSVDTEYALYDEGISSFGESELYSHKDAEGFINLFGLPCKIKALKNF</sequence>
<feature type="chain" id="PRO_0000321308" description="Argininosuccinate synthase">
    <location>
        <begin position="1"/>
        <end position="397"/>
    </location>
</feature>
<feature type="binding site" evidence="1">
    <location>
        <begin position="8"/>
        <end position="16"/>
    </location>
    <ligand>
        <name>ATP</name>
        <dbReference type="ChEBI" id="CHEBI:30616"/>
    </ligand>
</feature>
<feature type="binding site" evidence="1">
    <location>
        <position position="86"/>
    </location>
    <ligand>
        <name>L-citrulline</name>
        <dbReference type="ChEBI" id="CHEBI:57743"/>
    </ligand>
</feature>
<feature type="binding site" evidence="1">
    <location>
        <position position="91"/>
    </location>
    <ligand>
        <name>L-citrulline</name>
        <dbReference type="ChEBI" id="CHEBI:57743"/>
    </ligand>
</feature>
<feature type="binding site" evidence="1">
    <location>
        <position position="116"/>
    </location>
    <ligand>
        <name>ATP</name>
        <dbReference type="ChEBI" id="CHEBI:30616"/>
    </ligand>
</feature>
<feature type="binding site" evidence="1">
    <location>
        <position position="118"/>
    </location>
    <ligand>
        <name>L-aspartate</name>
        <dbReference type="ChEBI" id="CHEBI:29991"/>
    </ligand>
</feature>
<feature type="binding site" evidence="1">
    <location>
        <position position="122"/>
    </location>
    <ligand>
        <name>L-aspartate</name>
        <dbReference type="ChEBI" id="CHEBI:29991"/>
    </ligand>
</feature>
<feature type="binding site" evidence="1">
    <location>
        <position position="122"/>
    </location>
    <ligand>
        <name>L-citrulline</name>
        <dbReference type="ChEBI" id="CHEBI:57743"/>
    </ligand>
</feature>
<feature type="binding site" evidence="1">
    <location>
        <position position="123"/>
    </location>
    <ligand>
        <name>L-aspartate</name>
        <dbReference type="ChEBI" id="CHEBI:29991"/>
    </ligand>
</feature>
<feature type="binding site" evidence="1">
    <location>
        <position position="126"/>
    </location>
    <ligand>
        <name>L-citrulline</name>
        <dbReference type="ChEBI" id="CHEBI:57743"/>
    </ligand>
</feature>
<feature type="binding site" evidence="1">
    <location>
        <position position="175"/>
    </location>
    <ligand>
        <name>L-citrulline</name>
        <dbReference type="ChEBI" id="CHEBI:57743"/>
    </ligand>
</feature>
<feature type="binding site" evidence="1">
    <location>
        <position position="184"/>
    </location>
    <ligand>
        <name>L-citrulline</name>
        <dbReference type="ChEBI" id="CHEBI:57743"/>
    </ligand>
</feature>
<feature type="binding site" evidence="1">
    <location>
        <position position="260"/>
    </location>
    <ligand>
        <name>L-citrulline</name>
        <dbReference type="ChEBI" id="CHEBI:57743"/>
    </ligand>
</feature>
<feature type="binding site" evidence="1">
    <location>
        <position position="272"/>
    </location>
    <ligand>
        <name>L-citrulline</name>
        <dbReference type="ChEBI" id="CHEBI:57743"/>
    </ligand>
</feature>
<organism>
    <name type="scientific">Clostridium botulinum (strain Langeland / NCTC 10281 / Type F)</name>
    <dbReference type="NCBI Taxonomy" id="441772"/>
    <lineage>
        <taxon>Bacteria</taxon>
        <taxon>Bacillati</taxon>
        <taxon>Bacillota</taxon>
        <taxon>Clostridia</taxon>
        <taxon>Eubacteriales</taxon>
        <taxon>Clostridiaceae</taxon>
        <taxon>Clostridium</taxon>
    </lineage>
</organism>
<keyword id="KW-0028">Amino-acid biosynthesis</keyword>
<keyword id="KW-0055">Arginine biosynthesis</keyword>
<keyword id="KW-0067">ATP-binding</keyword>
<keyword id="KW-0963">Cytoplasm</keyword>
<keyword id="KW-0436">Ligase</keyword>
<keyword id="KW-0547">Nucleotide-binding</keyword>